<sequence>MADITKQDVIDFIANMTVLELSELITELEEKFGVSAAAPVAMMAGGMPAGGDAGAAEEKTEFDVVLLTSGDKKIQVIKEVRAITGLGLKEAKALVEEAPKPVKEGVPKDEAEKLKAQLEGAGAQVEIK</sequence>
<protein>
    <recommendedName>
        <fullName evidence="1">Large ribosomal subunit protein bL12</fullName>
    </recommendedName>
    <alternativeName>
        <fullName evidence="2">50S ribosomal protein L7/L12</fullName>
    </alternativeName>
</protein>
<feature type="chain" id="PRO_1000121426" description="Large ribosomal subunit protein bL12">
    <location>
        <begin position="1"/>
        <end position="128"/>
    </location>
</feature>
<name>RL7_DESOH</name>
<evidence type="ECO:0000255" key="1">
    <source>
        <dbReference type="HAMAP-Rule" id="MF_00368"/>
    </source>
</evidence>
<evidence type="ECO:0000305" key="2"/>
<comment type="function">
    <text evidence="1">Forms part of the ribosomal stalk which helps the ribosome interact with GTP-bound translation factors. Is thus essential for accurate translation.</text>
</comment>
<comment type="subunit">
    <text evidence="1">Homodimer. Part of the ribosomal stalk of the 50S ribosomal subunit. Forms a multimeric L10(L12)X complex, where L10 forms an elongated spine to which 2 to 4 L12 dimers bind in a sequential fashion. Binds GTP-bound translation factors.</text>
</comment>
<comment type="similarity">
    <text evidence="1">Belongs to the bacterial ribosomal protein bL12 family.</text>
</comment>
<dbReference type="EMBL" id="CP000859">
    <property type="protein sequence ID" value="ABW66511.1"/>
    <property type="molecule type" value="Genomic_DNA"/>
</dbReference>
<dbReference type="SMR" id="A8ZV50"/>
<dbReference type="STRING" id="96561.Dole_0701"/>
<dbReference type="KEGG" id="dol:Dole_0701"/>
<dbReference type="eggNOG" id="COG0222">
    <property type="taxonomic scope" value="Bacteria"/>
</dbReference>
<dbReference type="HOGENOM" id="CLU_086499_3_2_7"/>
<dbReference type="OrthoDB" id="9811748at2"/>
<dbReference type="Proteomes" id="UP000008561">
    <property type="component" value="Chromosome"/>
</dbReference>
<dbReference type="GO" id="GO:0022625">
    <property type="term" value="C:cytosolic large ribosomal subunit"/>
    <property type="evidence" value="ECO:0007669"/>
    <property type="project" value="TreeGrafter"/>
</dbReference>
<dbReference type="GO" id="GO:0003729">
    <property type="term" value="F:mRNA binding"/>
    <property type="evidence" value="ECO:0007669"/>
    <property type="project" value="TreeGrafter"/>
</dbReference>
<dbReference type="GO" id="GO:0003735">
    <property type="term" value="F:structural constituent of ribosome"/>
    <property type="evidence" value="ECO:0007669"/>
    <property type="project" value="InterPro"/>
</dbReference>
<dbReference type="GO" id="GO:0006412">
    <property type="term" value="P:translation"/>
    <property type="evidence" value="ECO:0007669"/>
    <property type="project" value="UniProtKB-UniRule"/>
</dbReference>
<dbReference type="CDD" id="cd00387">
    <property type="entry name" value="Ribosomal_L7_L12"/>
    <property type="match status" value="1"/>
</dbReference>
<dbReference type="FunFam" id="3.30.1390.10:FF:000001">
    <property type="entry name" value="50S ribosomal protein L7/L12"/>
    <property type="match status" value="1"/>
</dbReference>
<dbReference type="Gene3D" id="3.30.1390.10">
    <property type="match status" value="1"/>
</dbReference>
<dbReference type="Gene3D" id="1.20.5.710">
    <property type="entry name" value="Single helix bin"/>
    <property type="match status" value="1"/>
</dbReference>
<dbReference type="HAMAP" id="MF_00368">
    <property type="entry name" value="Ribosomal_bL12"/>
    <property type="match status" value="1"/>
</dbReference>
<dbReference type="InterPro" id="IPR000206">
    <property type="entry name" value="Ribosomal_bL12"/>
</dbReference>
<dbReference type="InterPro" id="IPR013823">
    <property type="entry name" value="Ribosomal_bL12_C"/>
</dbReference>
<dbReference type="InterPro" id="IPR014719">
    <property type="entry name" value="Ribosomal_bL12_C/ClpS-like"/>
</dbReference>
<dbReference type="InterPro" id="IPR008932">
    <property type="entry name" value="Ribosomal_bL12_oligo"/>
</dbReference>
<dbReference type="InterPro" id="IPR036235">
    <property type="entry name" value="Ribosomal_bL12_oligo_N_sf"/>
</dbReference>
<dbReference type="NCBIfam" id="TIGR00855">
    <property type="entry name" value="L12"/>
    <property type="match status" value="1"/>
</dbReference>
<dbReference type="PANTHER" id="PTHR45987">
    <property type="entry name" value="39S RIBOSOMAL PROTEIN L12"/>
    <property type="match status" value="1"/>
</dbReference>
<dbReference type="PANTHER" id="PTHR45987:SF4">
    <property type="entry name" value="LARGE RIBOSOMAL SUBUNIT PROTEIN BL12M"/>
    <property type="match status" value="1"/>
</dbReference>
<dbReference type="Pfam" id="PF00542">
    <property type="entry name" value="Ribosomal_L12"/>
    <property type="match status" value="1"/>
</dbReference>
<dbReference type="Pfam" id="PF16320">
    <property type="entry name" value="Ribosomal_L12_N"/>
    <property type="match status" value="1"/>
</dbReference>
<dbReference type="SUPFAM" id="SSF54736">
    <property type="entry name" value="ClpS-like"/>
    <property type="match status" value="1"/>
</dbReference>
<dbReference type="SUPFAM" id="SSF48300">
    <property type="entry name" value="Ribosomal protein L7/12, oligomerisation (N-terminal) domain"/>
    <property type="match status" value="1"/>
</dbReference>
<keyword id="KW-1185">Reference proteome</keyword>
<keyword id="KW-0687">Ribonucleoprotein</keyword>
<keyword id="KW-0689">Ribosomal protein</keyword>
<reference key="1">
    <citation type="submission" date="2007-10" db="EMBL/GenBank/DDBJ databases">
        <title>Complete sequence of Desulfococcus oleovorans Hxd3.</title>
        <authorList>
            <consortium name="US DOE Joint Genome Institute"/>
            <person name="Copeland A."/>
            <person name="Lucas S."/>
            <person name="Lapidus A."/>
            <person name="Barry K."/>
            <person name="Glavina del Rio T."/>
            <person name="Dalin E."/>
            <person name="Tice H."/>
            <person name="Pitluck S."/>
            <person name="Kiss H."/>
            <person name="Brettin T."/>
            <person name="Bruce D."/>
            <person name="Detter J.C."/>
            <person name="Han C."/>
            <person name="Schmutz J."/>
            <person name="Larimer F."/>
            <person name="Land M."/>
            <person name="Hauser L."/>
            <person name="Kyrpides N."/>
            <person name="Kim E."/>
            <person name="Wawrik B."/>
            <person name="Richardson P."/>
        </authorList>
    </citation>
    <scope>NUCLEOTIDE SEQUENCE [LARGE SCALE GENOMIC DNA]</scope>
    <source>
        <strain>DSM 6200 / JCM 39069 / Hxd3</strain>
    </source>
</reference>
<proteinExistence type="inferred from homology"/>
<organism>
    <name type="scientific">Desulfosudis oleivorans (strain DSM 6200 / JCM 39069 / Hxd3)</name>
    <name type="common">Desulfococcus oleovorans</name>
    <dbReference type="NCBI Taxonomy" id="96561"/>
    <lineage>
        <taxon>Bacteria</taxon>
        <taxon>Pseudomonadati</taxon>
        <taxon>Thermodesulfobacteriota</taxon>
        <taxon>Desulfobacteria</taxon>
        <taxon>Desulfobacterales</taxon>
        <taxon>Desulfosudaceae</taxon>
        <taxon>Desulfosudis</taxon>
    </lineage>
</organism>
<accession>A8ZV50</accession>
<gene>
    <name evidence="1" type="primary">rplL</name>
    <name type="ordered locus">Dole_0701</name>
</gene>